<accession>Q94JZ8</accession>
<accession>Q9MA26</accession>
<organism>
    <name type="scientific">Arabidopsis thaliana</name>
    <name type="common">Mouse-ear cress</name>
    <dbReference type="NCBI Taxonomy" id="3702"/>
    <lineage>
        <taxon>Eukaryota</taxon>
        <taxon>Viridiplantae</taxon>
        <taxon>Streptophyta</taxon>
        <taxon>Embryophyta</taxon>
        <taxon>Tracheophyta</taxon>
        <taxon>Spermatophyta</taxon>
        <taxon>Magnoliopsida</taxon>
        <taxon>eudicotyledons</taxon>
        <taxon>Gunneridae</taxon>
        <taxon>Pentapetalae</taxon>
        <taxon>rosids</taxon>
        <taxon>malvids</taxon>
        <taxon>Brassicales</taxon>
        <taxon>Brassicaceae</taxon>
        <taxon>Camelineae</taxon>
        <taxon>Arabidopsis</taxon>
    </lineage>
</organism>
<feature type="chain" id="PRO_0000432605" description="Plant UBX domain-containing protein 7">
    <location>
        <begin position="1"/>
        <end position="468"/>
    </location>
</feature>
<feature type="domain" description="UBA-like">
    <location>
        <begin position="7"/>
        <end position="48"/>
    </location>
</feature>
<feature type="domain" description="UIM" evidence="2">
    <location>
        <begin position="328"/>
        <end position="347"/>
    </location>
</feature>
<feature type="domain" description="UBX" evidence="3">
    <location>
        <begin position="385"/>
        <end position="466"/>
    </location>
</feature>
<feature type="region of interest" description="Disordered" evidence="4">
    <location>
        <begin position="138"/>
        <end position="168"/>
    </location>
</feature>
<feature type="region of interest" description="Disordered" evidence="4">
    <location>
        <begin position="299"/>
        <end position="329"/>
    </location>
</feature>
<feature type="compositionally biased region" description="Low complexity" evidence="4">
    <location>
        <begin position="150"/>
        <end position="166"/>
    </location>
</feature>
<feature type="modified residue" description="N-acetylmethionine" evidence="10">
    <location>
        <position position="1"/>
    </location>
</feature>
<sequence length="468" mass="51808">MEGMLSSGDQQRLVSSFLEIAVGQTAETARQFLQATSWKLEEAIQLFYIGNEGGMLQSGTHTQPASNDDAAAQSWGAATGTGNEMILPNDVDEVRAPLPVVRETLYGESMYYGAMRVGNSQPEPNSLIAFRNFSEEPKSPGIWEPDEGDSSASASASASASESASAPRDSLASLYRPPFHLMFQGSFEQAKTTSSSQDKWLLVNLQSTTEFSSHMLNRDTWANDAVSQTIKANFIFWQVYDDTTEGRKVCTYYKLESIPVVLVIDPTTGQRMRMWTGMVDPENLLEDLVPFMDGGPREHFASLSKKRPRGSFSLTPHSKPKEDVAKDEEEEELQRALAASLEDNNMKESSDDQSTIIPEEVAVEAVTSAVLPTFPPLPEEPKGGDRSLQCRVGIRLPNGQRLQRNFLKTDTIQLLWSFCYSQLEESERKKPLKLTQAIPGESKTLEYESNLTLEQSGVANSMISATWE</sequence>
<name>PUX7_ARATH</name>
<evidence type="ECO:0000250" key="1">
    <source>
        <dbReference type="UniProtKB" id="O94888"/>
    </source>
</evidence>
<evidence type="ECO:0000255" key="2">
    <source>
        <dbReference type="PROSITE-ProRule" id="PRU00213"/>
    </source>
</evidence>
<evidence type="ECO:0000255" key="3">
    <source>
        <dbReference type="PROSITE-ProRule" id="PRU00215"/>
    </source>
</evidence>
<evidence type="ECO:0000256" key="4">
    <source>
        <dbReference type="SAM" id="MobiDB-lite"/>
    </source>
</evidence>
<evidence type="ECO:0000269" key="5">
    <source>
    </source>
</evidence>
<evidence type="ECO:0000303" key="6">
    <source ref="5"/>
</evidence>
<evidence type="ECO:0000305" key="7"/>
<evidence type="ECO:0000312" key="8">
    <source>
        <dbReference type="Araport" id="AT1G14570"/>
    </source>
</evidence>
<evidence type="ECO:0000312" key="9">
    <source>
        <dbReference type="EMBL" id="AAF63167.1"/>
    </source>
</evidence>
<evidence type="ECO:0007744" key="10">
    <source>
    </source>
</evidence>
<protein>
    <recommendedName>
        <fullName evidence="6">Plant UBX domain-containing protein 7</fullName>
        <shortName evidence="6">PUX7</shortName>
    </recommendedName>
</protein>
<keyword id="KW-0007">Acetylation</keyword>
<keyword id="KW-0025">Alternative splicing</keyword>
<keyword id="KW-0539">Nucleus</keyword>
<keyword id="KW-1185">Reference proteome</keyword>
<keyword id="KW-0833">Ubl conjugation pathway</keyword>
<comment type="function">
    <text evidence="5">Acts as a bridge between CDC48A and ubiquitin, suggesting a role in targeted protein degradation.</text>
</comment>
<comment type="subunit">
    <text evidence="5">Interacts with CDC48A via its UBX domain and with ubiquitin via its N-terminal UBA-like domain.</text>
</comment>
<comment type="interaction">
    <interactant intactId="EBI-10684297">
        <id>Q94JZ8</id>
    </interactant>
    <interactant intactId="EBI-1563238">
        <id>P54609</id>
        <label>CDC48A</label>
    </interactant>
    <organismsDiffer>false</organismsDiffer>
    <experiments>3</experiments>
</comment>
<comment type="subcellular location">
    <subcellularLocation>
        <location evidence="5">Nucleus</location>
    </subcellularLocation>
</comment>
<comment type="alternative products">
    <event type="alternative splicing"/>
    <isoform>
        <id>Q94JZ8-1</id>
        <name>1</name>
        <sequence type="displayed"/>
    </isoform>
    <text>A number of isoforms are produced. According to EST sequences.</text>
</comment>
<comment type="tissue specificity">
    <text evidence="5">Expressed broadly in sporophyte and gametophyte cells.</text>
</comment>
<comment type="developmental stage">
    <text evidence="5">Expressed early during male gametophyte development.</text>
</comment>
<comment type="domain">
    <text evidence="1">The UIM (ubiquitin-interacting motif) is required to engage the NEDD8 modification on cullins.</text>
</comment>
<comment type="disruption phenotype">
    <text evidence="5">No visible phenotype.</text>
</comment>
<comment type="sequence caution" evidence="7">
    <conflict type="erroneous gene model prediction">
        <sequence resource="EMBL-CDS" id="AAF63167"/>
    </conflict>
</comment>
<dbReference type="EMBL" id="AC010657">
    <property type="protein sequence ID" value="AAF63167.1"/>
    <property type="status" value="ALT_SEQ"/>
    <property type="molecule type" value="Genomic_DNA"/>
</dbReference>
<dbReference type="EMBL" id="CP002684">
    <property type="protein sequence ID" value="AEE29182.1"/>
    <property type="molecule type" value="Genomic_DNA"/>
</dbReference>
<dbReference type="EMBL" id="CP002684">
    <property type="protein sequence ID" value="AEE29183.1"/>
    <property type="molecule type" value="Genomic_DNA"/>
</dbReference>
<dbReference type="EMBL" id="AF370507">
    <property type="protein sequence ID" value="AAK43884.1"/>
    <property type="molecule type" value="mRNA"/>
</dbReference>
<dbReference type="EMBL" id="AY064683">
    <property type="protein sequence ID" value="AAL47388.1"/>
    <property type="molecule type" value="mRNA"/>
</dbReference>
<dbReference type="EMBL" id="AK317323">
    <property type="protein sequence ID" value="BAH19997.1"/>
    <property type="molecule type" value="mRNA"/>
</dbReference>
<dbReference type="PIR" id="D86280">
    <property type="entry name" value="D86280"/>
</dbReference>
<dbReference type="RefSeq" id="NP_563954.1">
    <molecule id="Q94JZ8-1"/>
    <property type="nucleotide sequence ID" value="NM_101324.4"/>
</dbReference>
<dbReference type="RefSeq" id="NP_973827.1">
    <molecule id="Q94JZ8-1"/>
    <property type="nucleotide sequence ID" value="NM_202098.3"/>
</dbReference>
<dbReference type="SMR" id="Q94JZ8"/>
<dbReference type="FunCoup" id="Q94JZ8">
    <property type="interactions" value="4334"/>
</dbReference>
<dbReference type="IntAct" id="Q94JZ8">
    <property type="interactions" value="2"/>
</dbReference>
<dbReference type="STRING" id="3702.Q94JZ8"/>
<dbReference type="TCDB" id="3.A.16.1.5">
    <property type="family name" value="the endoplasmic reticular retrotranslocon (er-rt) family"/>
</dbReference>
<dbReference type="GlyGen" id="Q94JZ8">
    <property type="glycosylation" value="1 site"/>
</dbReference>
<dbReference type="iPTMnet" id="Q94JZ8"/>
<dbReference type="PaxDb" id="3702-AT1G14570.2"/>
<dbReference type="ProteomicsDB" id="236548">
    <molecule id="Q94JZ8-1"/>
</dbReference>
<dbReference type="EnsemblPlants" id="AT1G14570.1">
    <molecule id="Q94JZ8-1"/>
    <property type="protein sequence ID" value="AT1G14570.1"/>
    <property type="gene ID" value="AT1G14570"/>
</dbReference>
<dbReference type="EnsemblPlants" id="AT1G14570.2">
    <molecule id="Q94JZ8-1"/>
    <property type="protein sequence ID" value="AT1G14570.2"/>
    <property type="gene ID" value="AT1G14570"/>
</dbReference>
<dbReference type="GeneID" id="838019"/>
<dbReference type="Gramene" id="AT1G14570.1">
    <molecule id="Q94JZ8-1"/>
    <property type="protein sequence ID" value="AT1G14570.1"/>
    <property type="gene ID" value="AT1G14570"/>
</dbReference>
<dbReference type="Gramene" id="AT1G14570.2">
    <molecule id="Q94JZ8-1"/>
    <property type="protein sequence ID" value="AT1G14570.2"/>
    <property type="gene ID" value="AT1G14570"/>
</dbReference>
<dbReference type="KEGG" id="ath:AT1G14570"/>
<dbReference type="Araport" id="AT1G14570"/>
<dbReference type="TAIR" id="AT1G14570">
    <property type="gene designation" value="PUX7"/>
</dbReference>
<dbReference type="eggNOG" id="KOG1364">
    <property type="taxonomic scope" value="Eukaryota"/>
</dbReference>
<dbReference type="InParanoid" id="Q94JZ8"/>
<dbReference type="OMA" id="PAIFDCQ"/>
<dbReference type="OrthoDB" id="270602at2759"/>
<dbReference type="PhylomeDB" id="Q94JZ8"/>
<dbReference type="PRO" id="PR:Q94JZ8"/>
<dbReference type="Proteomes" id="UP000006548">
    <property type="component" value="Chromosome 1"/>
</dbReference>
<dbReference type="ExpressionAtlas" id="Q94JZ8">
    <property type="expression patterns" value="baseline and differential"/>
</dbReference>
<dbReference type="GO" id="GO:0005634">
    <property type="term" value="C:nucleus"/>
    <property type="evidence" value="ECO:0000314"/>
    <property type="project" value="TAIR"/>
</dbReference>
<dbReference type="GO" id="GO:0030674">
    <property type="term" value="F:protein-macromolecule adaptor activity"/>
    <property type="evidence" value="ECO:0000314"/>
    <property type="project" value="TAIR"/>
</dbReference>
<dbReference type="CDD" id="cd02958">
    <property type="entry name" value="UAS"/>
    <property type="match status" value="1"/>
</dbReference>
<dbReference type="CDD" id="cd14273">
    <property type="entry name" value="UBA_TAP-C_like"/>
    <property type="match status" value="1"/>
</dbReference>
<dbReference type="CDD" id="cd01767">
    <property type="entry name" value="UBX"/>
    <property type="match status" value="1"/>
</dbReference>
<dbReference type="FunFam" id="3.40.30.10:FF:000381">
    <property type="entry name" value="UBX domain-containing protein"/>
    <property type="match status" value="1"/>
</dbReference>
<dbReference type="Gene3D" id="1.10.8.10">
    <property type="entry name" value="DNA helicase RuvA subunit, C-terminal domain"/>
    <property type="match status" value="1"/>
</dbReference>
<dbReference type="Gene3D" id="3.40.30.10">
    <property type="entry name" value="Glutaredoxin"/>
    <property type="match status" value="1"/>
</dbReference>
<dbReference type="Gene3D" id="3.10.20.90">
    <property type="entry name" value="Phosphatidylinositol 3-kinase Catalytic Subunit, Chain A, domain 1"/>
    <property type="match status" value="1"/>
</dbReference>
<dbReference type="InterPro" id="IPR036249">
    <property type="entry name" value="Thioredoxin-like_sf"/>
</dbReference>
<dbReference type="InterPro" id="IPR006577">
    <property type="entry name" value="UAS"/>
</dbReference>
<dbReference type="InterPro" id="IPR009060">
    <property type="entry name" value="UBA-like_sf"/>
</dbReference>
<dbReference type="InterPro" id="IPR029071">
    <property type="entry name" value="Ubiquitin-like_domsf"/>
</dbReference>
<dbReference type="InterPro" id="IPR017346">
    <property type="entry name" value="UBX_7/2"/>
</dbReference>
<dbReference type="InterPro" id="IPR001012">
    <property type="entry name" value="UBX_dom"/>
</dbReference>
<dbReference type="InterPro" id="IPR050730">
    <property type="entry name" value="UBX_domain-protein"/>
</dbReference>
<dbReference type="InterPro" id="IPR003903">
    <property type="entry name" value="UIM_dom"/>
</dbReference>
<dbReference type="PANTHER" id="PTHR23322">
    <property type="entry name" value="FAS-ASSOCIATED PROTEIN"/>
    <property type="match status" value="1"/>
</dbReference>
<dbReference type="PANTHER" id="PTHR23322:SF6">
    <property type="entry name" value="UBX DOMAIN-CONTAINING PROTEIN 7"/>
    <property type="match status" value="1"/>
</dbReference>
<dbReference type="Pfam" id="PF13899">
    <property type="entry name" value="Thioredoxin_7"/>
    <property type="match status" value="1"/>
</dbReference>
<dbReference type="Pfam" id="PF14555">
    <property type="entry name" value="UBA_4"/>
    <property type="match status" value="1"/>
</dbReference>
<dbReference type="Pfam" id="PF00789">
    <property type="entry name" value="UBX"/>
    <property type="match status" value="1"/>
</dbReference>
<dbReference type="PIRSF" id="PIRSF037991">
    <property type="entry name" value="UCP037991_UBX7/2"/>
    <property type="match status" value="1"/>
</dbReference>
<dbReference type="SMART" id="SM00594">
    <property type="entry name" value="UAS"/>
    <property type="match status" value="1"/>
</dbReference>
<dbReference type="SUPFAM" id="SSF52833">
    <property type="entry name" value="Thioredoxin-like"/>
    <property type="match status" value="1"/>
</dbReference>
<dbReference type="SUPFAM" id="SSF46934">
    <property type="entry name" value="UBA-like"/>
    <property type="match status" value="1"/>
</dbReference>
<dbReference type="SUPFAM" id="SSF54236">
    <property type="entry name" value="Ubiquitin-like"/>
    <property type="match status" value="1"/>
</dbReference>
<dbReference type="PROSITE" id="PS50033">
    <property type="entry name" value="UBX"/>
    <property type="match status" value="1"/>
</dbReference>
<dbReference type="PROSITE" id="PS50330">
    <property type="entry name" value="UIM"/>
    <property type="match status" value="1"/>
</dbReference>
<reference key="1">
    <citation type="journal article" date="2000" name="Nature">
        <title>Sequence and analysis of chromosome 1 of the plant Arabidopsis thaliana.</title>
        <authorList>
            <person name="Theologis A."/>
            <person name="Ecker J.R."/>
            <person name="Palm C.J."/>
            <person name="Federspiel N.A."/>
            <person name="Kaul S."/>
            <person name="White O."/>
            <person name="Alonso J."/>
            <person name="Altafi H."/>
            <person name="Araujo R."/>
            <person name="Bowman C.L."/>
            <person name="Brooks S.Y."/>
            <person name="Buehler E."/>
            <person name="Chan A."/>
            <person name="Chao Q."/>
            <person name="Chen H."/>
            <person name="Cheuk R.F."/>
            <person name="Chin C.W."/>
            <person name="Chung M.K."/>
            <person name="Conn L."/>
            <person name="Conway A.B."/>
            <person name="Conway A.R."/>
            <person name="Creasy T.H."/>
            <person name="Dewar K."/>
            <person name="Dunn P."/>
            <person name="Etgu P."/>
            <person name="Feldblyum T.V."/>
            <person name="Feng J.-D."/>
            <person name="Fong B."/>
            <person name="Fujii C.Y."/>
            <person name="Gill J.E."/>
            <person name="Goldsmith A.D."/>
            <person name="Haas B."/>
            <person name="Hansen N.F."/>
            <person name="Hughes B."/>
            <person name="Huizar L."/>
            <person name="Hunter J.L."/>
            <person name="Jenkins J."/>
            <person name="Johnson-Hopson C."/>
            <person name="Khan S."/>
            <person name="Khaykin E."/>
            <person name="Kim C.J."/>
            <person name="Koo H.L."/>
            <person name="Kremenetskaia I."/>
            <person name="Kurtz D.B."/>
            <person name="Kwan A."/>
            <person name="Lam B."/>
            <person name="Langin-Hooper S."/>
            <person name="Lee A."/>
            <person name="Lee J.M."/>
            <person name="Lenz C.A."/>
            <person name="Li J.H."/>
            <person name="Li Y.-P."/>
            <person name="Lin X."/>
            <person name="Liu S.X."/>
            <person name="Liu Z.A."/>
            <person name="Luros J.S."/>
            <person name="Maiti R."/>
            <person name="Marziali A."/>
            <person name="Militscher J."/>
            <person name="Miranda M."/>
            <person name="Nguyen M."/>
            <person name="Nierman W.C."/>
            <person name="Osborne B.I."/>
            <person name="Pai G."/>
            <person name="Peterson J."/>
            <person name="Pham P.K."/>
            <person name="Rizzo M."/>
            <person name="Rooney T."/>
            <person name="Rowley D."/>
            <person name="Sakano H."/>
            <person name="Salzberg S.L."/>
            <person name="Schwartz J.R."/>
            <person name="Shinn P."/>
            <person name="Southwick A.M."/>
            <person name="Sun H."/>
            <person name="Tallon L.J."/>
            <person name="Tambunga G."/>
            <person name="Toriumi M.J."/>
            <person name="Town C.D."/>
            <person name="Utterback T."/>
            <person name="Van Aken S."/>
            <person name="Vaysberg M."/>
            <person name="Vysotskaia V.S."/>
            <person name="Walker M."/>
            <person name="Wu D."/>
            <person name="Yu G."/>
            <person name="Fraser C.M."/>
            <person name="Venter J.C."/>
            <person name="Davis R.W."/>
        </authorList>
    </citation>
    <scope>NUCLEOTIDE SEQUENCE [LARGE SCALE GENOMIC DNA]</scope>
    <source>
        <strain>cv. Columbia</strain>
    </source>
</reference>
<reference key="2">
    <citation type="journal article" date="2017" name="Plant J.">
        <title>Araport11: a complete reannotation of the Arabidopsis thaliana reference genome.</title>
        <authorList>
            <person name="Cheng C.Y."/>
            <person name="Krishnakumar V."/>
            <person name="Chan A.P."/>
            <person name="Thibaud-Nissen F."/>
            <person name="Schobel S."/>
            <person name="Town C.D."/>
        </authorList>
    </citation>
    <scope>GENOME REANNOTATION</scope>
    <source>
        <strain>cv. Columbia</strain>
    </source>
</reference>
<reference key="3">
    <citation type="journal article" date="2003" name="Science">
        <title>Empirical analysis of transcriptional activity in the Arabidopsis genome.</title>
        <authorList>
            <person name="Yamada K."/>
            <person name="Lim J."/>
            <person name="Dale J.M."/>
            <person name="Chen H."/>
            <person name="Shinn P."/>
            <person name="Palm C.J."/>
            <person name="Southwick A.M."/>
            <person name="Wu H.C."/>
            <person name="Kim C.J."/>
            <person name="Nguyen M."/>
            <person name="Pham P.K."/>
            <person name="Cheuk R.F."/>
            <person name="Karlin-Newmann G."/>
            <person name="Liu S.X."/>
            <person name="Lam B."/>
            <person name="Sakano H."/>
            <person name="Wu T."/>
            <person name="Yu G."/>
            <person name="Miranda M."/>
            <person name="Quach H.L."/>
            <person name="Tripp M."/>
            <person name="Chang C.H."/>
            <person name="Lee J.M."/>
            <person name="Toriumi M.J."/>
            <person name="Chan M.M."/>
            <person name="Tang C.C."/>
            <person name="Onodera C.S."/>
            <person name="Deng J.M."/>
            <person name="Akiyama K."/>
            <person name="Ansari Y."/>
            <person name="Arakawa T."/>
            <person name="Banh J."/>
            <person name="Banno F."/>
            <person name="Bowser L."/>
            <person name="Brooks S.Y."/>
            <person name="Carninci P."/>
            <person name="Chao Q."/>
            <person name="Choy N."/>
            <person name="Enju A."/>
            <person name="Goldsmith A.D."/>
            <person name="Gurjal M."/>
            <person name="Hansen N.F."/>
            <person name="Hayashizaki Y."/>
            <person name="Johnson-Hopson C."/>
            <person name="Hsuan V.W."/>
            <person name="Iida K."/>
            <person name="Karnes M."/>
            <person name="Khan S."/>
            <person name="Koesema E."/>
            <person name="Ishida J."/>
            <person name="Jiang P.X."/>
            <person name="Jones T."/>
            <person name="Kawai J."/>
            <person name="Kamiya A."/>
            <person name="Meyers C."/>
            <person name="Nakajima M."/>
            <person name="Narusaka M."/>
            <person name="Seki M."/>
            <person name="Sakurai T."/>
            <person name="Satou M."/>
            <person name="Tamse R."/>
            <person name="Vaysberg M."/>
            <person name="Wallender E.K."/>
            <person name="Wong C."/>
            <person name="Yamamura Y."/>
            <person name="Yuan S."/>
            <person name="Shinozaki K."/>
            <person name="Davis R.W."/>
            <person name="Theologis A."/>
            <person name="Ecker J.R."/>
        </authorList>
    </citation>
    <scope>NUCLEOTIDE SEQUENCE [LARGE SCALE MRNA]</scope>
    <source>
        <strain>cv. Columbia</strain>
    </source>
</reference>
<reference key="4">
    <citation type="journal article" date="2009" name="DNA Res.">
        <title>Analysis of multiple occurrences of alternative splicing events in Arabidopsis thaliana using novel sequenced full-length cDNAs.</title>
        <authorList>
            <person name="Iida K."/>
            <person name="Fukami-Kobayashi K."/>
            <person name="Toyoda A."/>
            <person name="Sakaki Y."/>
            <person name="Kobayashi M."/>
            <person name="Seki M."/>
            <person name="Shinozaki K."/>
        </authorList>
    </citation>
    <scope>NUCLEOTIDE SEQUENCE [LARGE SCALE MRNA]</scope>
    <source>
        <strain>cv. Columbia</strain>
        <tissue>Flower</tissue>
        <tissue>Silique</tissue>
    </source>
</reference>
<reference key="5">
    <citation type="book" date="2005" name="Proceedings of the 16th international conference on Arabidopsis research">
        <title>The plant UBX-domain containing (PUX) protein family regulates the function of Arabidopsis CDC48, a conserved essential AAA-ATPase.</title>
        <authorList>
            <person name="Posthuma R."/>
            <person name="Rancour D."/>
            <person name="Park S."/>
            <person name="Bates B."/>
            <person name="Bednarek S."/>
        </authorList>
    </citation>
    <scope>GENE FAMILY</scope>
</reference>
<reference key="6">
    <citation type="journal article" date="2012" name="Mol. Cell. Proteomics">
        <title>Comparative large-scale characterisation of plant vs. mammal proteins reveals similar and idiosyncratic N-alpha acetylation features.</title>
        <authorList>
            <person name="Bienvenut W.V."/>
            <person name="Sumpton D."/>
            <person name="Martinez A."/>
            <person name="Lilla S."/>
            <person name="Espagne C."/>
            <person name="Meinnel T."/>
            <person name="Giglione C."/>
        </authorList>
    </citation>
    <scope>ACETYLATION [LARGE SCALE ANALYSIS] AT MET-1</scope>
    <scope>IDENTIFICATION BY MASS SPECTROMETRY [LARGE SCALE ANALYSIS]</scope>
</reference>
<reference key="7">
    <citation type="journal article" date="2013" name="Gene">
        <title>Functional characterization of the plant ubiquitin regulatory X (UBX) domain-containing protein AtPUX7 in Arabidopsis thaliana.</title>
        <authorList>
            <person name="Gallois J.L."/>
            <person name="Drouaud J."/>
            <person name="Lecureuil A."/>
            <person name="Guyon-Debast A."/>
            <person name="Bonhomme S."/>
            <person name="Guerche P."/>
        </authorList>
    </citation>
    <scope>INTERACTION WITH CDC48A AND UBIQUITIN</scope>
    <scope>SUBCELLULAR LOCATION</scope>
    <scope>FUNCTION</scope>
    <scope>DISRUPTION PHENOTYPE</scope>
    <scope>TISSUE SPECIFICITY</scope>
    <scope>DEVELOPMENTAL STAGE</scope>
</reference>
<proteinExistence type="evidence at protein level"/>
<gene>
    <name evidence="6" type="primary">PUX7</name>
    <name evidence="8" type="ordered locus">At1g14570</name>
    <name evidence="9" type="ORF">T5E21.7</name>
</gene>